<gene>
    <name type="primary">Ice1</name>
    <name type="ORF">CG13550</name>
</gene>
<sequence>MNLDEFSDFNIDQLLGPSAPLQDALVAPYKQVSLPRSNQDVYAKRSRLAERIAQNDELIRQVKQLQAQNKQLADLQRTAQEVTDLYQKEKQQRIELEKRTKQIGERCGQLEKELDVQVGNCENLQEQLQVRGLPVEAKDVLSILMQFSQRLGDDCGLLRRDQNIMKKLREHCKTIDVSVPTPKSPNSRSKRKAHQPGVNQSTQTDEEPADPKPALCSVAVQVEGLIETRNQATQHKNTTTTRGTTTASFIKHHDVGTCFPEPKPLPNIRQILDEMLSWRDDVVIEPMSPLSDLQQELQLEDVPTNASVATCTTLCDIHREIDFVTDLPTQIKVSASRPPSRTMLDSVKEEARSSRELAKELFNFLPQNQSCLTNLPPQAFEELWQVFGQMVLALLQRRSNPSMATPPSVSQADFTRWLYELYEGTENQTEQTSNGSTSKRDFATSTECMDTGTDPIIQSPNISHEGHVTPIRLPSKPKERKRKSKKRKAAATPKPIAKRKCLEMETNNELEVEREQTPETAIQFLSNLETFNMANCDNLEMELDEEELYLLQLTSNAKQNENKGNVRVQDPDDLKSPAQTSKFPKSENHLPAVLKETASSLKGYDEKQCPFPDKTEELMHKKTFEIQENIGSLTELPPNIDISAYPVSMAEVRIVSSNKPSEMEVNASEGTDSHLDKSVSNLDTGSMSLFGSDSDVESEYSIEQMAPELSDSDDTFDNSEEDCRSADEPSNSKKIRNSSLFGSESESDESEERALEADDLTEAEAKVEEKESEQKSSDVAPAASSGKLLVVEADLVTKTQPLFVEKLDLENTQHTSTCTNPKETDESEDEHGLVIDEQIFISQPEEPPLTVPIAAKRRRTQSELKTLSPPGEVRLTRQRAKQLLDEQKSGPEKGLSLVEQIRRQLKKAINKSEPFKKDSTHDSKKDSTHDLKPLEHEDELKAMQLGTNFEPIKLSCSISEESPASPPACEPMDELDPPPIEIPLEQAACTRKDDQHKSIVQHVLKMDTGLEKLVEANRKTLGKSQPQLCASIGKYLQENMQLESTCSDLAMDIYKVTKSEAVIVNAMITVICKIGLDDGPVERLLNALKYLNFSQRFLAELEERLFRNTKERPATELALNYVRLYLKATALQATMSAGYENPARLLLAKILYHFDQDMPPLVMEVLRQFPTALPHREQREYDNSDALITVIKHLLMNRQYDMQDPNGAERLLLSKLRFEYHFQPYEPSKQQVLENLVGKLKAGREEELGYAFALFCRRSPHLKVVESVVGEHLMPLATSYCDLAAQNELYDARLGLLLHCISLVLKPLPLDTDISAFVGFLKRLLVAVPRSGVQLAAVKASLRLQRFGFKYTLDALKDYRPNYELDPLTRAMIRCFAKRRRHFRHVAATGRRTEI</sequence>
<proteinExistence type="evidence at protein level"/>
<comment type="function">
    <text evidence="3 4">Component of the little elongation complex (LEC), a complex required to regulate small nuclear RNA (snRNA) gene transcription by RNA polymerase II and III (PubMed:22195968, PubMed:23932780). Specifically acts as a scaffold protein that promotes the LEC complex formation and recruitment and RNA polymerase II occupancy at snRNA genes in subnuclear bodies (PubMed:23932780).</text>
</comment>
<comment type="subunit">
    <text evidence="3">Component of the little elongation complex (LEC), at least composed of Ell, Eaf, Ice1 and Ice2.</text>
</comment>
<comment type="subcellular location">
    <subcellularLocation>
        <location evidence="3 4">Nucleus</location>
    </subcellularLocation>
    <text>Associates to transcriptionally active chromatin at snRNA genes.</text>
</comment>
<comment type="alternative products">
    <event type="alternative splicing"/>
    <isoform>
        <id>Q9W1R4-1</id>
        <name>1</name>
        <sequence type="displayed"/>
    </isoform>
    <isoform>
        <id>Q9W1R4-2</id>
        <name>2</name>
        <sequence type="described" ref="VSP_056746 VSP_056747"/>
    </isoform>
</comment>
<comment type="similarity">
    <text evidence="6">Belongs to the ICE1 family.</text>
</comment>
<name>ICE1_DROME</name>
<accession>Q9W1R4</accession>
<accession>Q8MRC0</accession>
<reference key="1">
    <citation type="journal article" date="2000" name="Science">
        <title>The genome sequence of Drosophila melanogaster.</title>
        <authorList>
            <person name="Adams M.D."/>
            <person name="Celniker S.E."/>
            <person name="Holt R.A."/>
            <person name="Evans C.A."/>
            <person name="Gocayne J.D."/>
            <person name="Amanatides P.G."/>
            <person name="Scherer S.E."/>
            <person name="Li P.W."/>
            <person name="Hoskins R.A."/>
            <person name="Galle R.F."/>
            <person name="George R.A."/>
            <person name="Lewis S.E."/>
            <person name="Richards S."/>
            <person name="Ashburner M."/>
            <person name="Henderson S.N."/>
            <person name="Sutton G.G."/>
            <person name="Wortman J.R."/>
            <person name="Yandell M.D."/>
            <person name="Zhang Q."/>
            <person name="Chen L.X."/>
            <person name="Brandon R.C."/>
            <person name="Rogers Y.-H.C."/>
            <person name="Blazej R.G."/>
            <person name="Champe M."/>
            <person name="Pfeiffer B.D."/>
            <person name="Wan K.H."/>
            <person name="Doyle C."/>
            <person name="Baxter E.G."/>
            <person name="Helt G."/>
            <person name="Nelson C.R."/>
            <person name="Miklos G.L.G."/>
            <person name="Abril J.F."/>
            <person name="Agbayani A."/>
            <person name="An H.-J."/>
            <person name="Andrews-Pfannkoch C."/>
            <person name="Baldwin D."/>
            <person name="Ballew R.M."/>
            <person name="Basu A."/>
            <person name="Baxendale J."/>
            <person name="Bayraktaroglu L."/>
            <person name="Beasley E.M."/>
            <person name="Beeson K.Y."/>
            <person name="Benos P.V."/>
            <person name="Berman B.P."/>
            <person name="Bhandari D."/>
            <person name="Bolshakov S."/>
            <person name="Borkova D."/>
            <person name="Botchan M.R."/>
            <person name="Bouck J."/>
            <person name="Brokstein P."/>
            <person name="Brottier P."/>
            <person name="Burtis K.C."/>
            <person name="Busam D.A."/>
            <person name="Butler H."/>
            <person name="Cadieu E."/>
            <person name="Center A."/>
            <person name="Chandra I."/>
            <person name="Cherry J.M."/>
            <person name="Cawley S."/>
            <person name="Dahlke C."/>
            <person name="Davenport L.B."/>
            <person name="Davies P."/>
            <person name="de Pablos B."/>
            <person name="Delcher A."/>
            <person name="Deng Z."/>
            <person name="Mays A.D."/>
            <person name="Dew I."/>
            <person name="Dietz S.M."/>
            <person name="Dodson K."/>
            <person name="Doup L.E."/>
            <person name="Downes M."/>
            <person name="Dugan-Rocha S."/>
            <person name="Dunkov B.C."/>
            <person name="Dunn P."/>
            <person name="Durbin K.J."/>
            <person name="Evangelista C.C."/>
            <person name="Ferraz C."/>
            <person name="Ferriera S."/>
            <person name="Fleischmann W."/>
            <person name="Fosler C."/>
            <person name="Gabrielian A.E."/>
            <person name="Garg N.S."/>
            <person name="Gelbart W.M."/>
            <person name="Glasser K."/>
            <person name="Glodek A."/>
            <person name="Gong F."/>
            <person name="Gorrell J.H."/>
            <person name="Gu Z."/>
            <person name="Guan P."/>
            <person name="Harris M."/>
            <person name="Harris N.L."/>
            <person name="Harvey D.A."/>
            <person name="Heiman T.J."/>
            <person name="Hernandez J.R."/>
            <person name="Houck J."/>
            <person name="Hostin D."/>
            <person name="Houston K.A."/>
            <person name="Howland T.J."/>
            <person name="Wei M.-H."/>
            <person name="Ibegwam C."/>
            <person name="Jalali M."/>
            <person name="Kalush F."/>
            <person name="Karpen G.H."/>
            <person name="Ke Z."/>
            <person name="Kennison J.A."/>
            <person name="Ketchum K.A."/>
            <person name="Kimmel B.E."/>
            <person name="Kodira C.D."/>
            <person name="Kraft C.L."/>
            <person name="Kravitz S."/>
            <person name="Kulp D."/>
            <person name="Lai Z."/>
            <person name="Lasko P."/>
            <person name="Lei Y."/>
            <person name="Levitsky A.A."/>
            <person name="Li J.H."/>
            <person name="Li Z."/>
            <person name="Liang Y."/>
            <person name="Lin X."/>
            <person name="Liu X."/>
            <person name="Mattei B."/>
            <person name="McIntosh T.C."/>
            <person name="McLeod M.P."/>
            <person name="McPherson D."/>
            <person name="Merkulov G."/>
            <person name="Milshina N.V."/>
            <person name="Mobarry C."/>
            <person name="Morris J."/>
            <person name="Moshrefi A."/>
            <person name="Mount S.M."/>
            <person name="Moy M."/>
            <person name="Murphy B."/>
            <person name="Murphy L."/>
            <person name="Muzny D.M."/>
            <person name="Nelson D.L."/>
            <person name="Nelson D.R."/>
            <person name="Nelson K.A."/>
            <person name="Nixon K."/>
            <person name="Nusskern D.R."/>
            <person name="Pacleb J.M."/>
            <person name="Palazzolo M."/>
            <person name="Pittman G.S."/>
            <person name="Pan S."/>
            <person name="Pollard J."/>
            <person name="Puri V."/>
            <person name="Reese M.G."/>
            <person name="Reinert K."/>
            <person name="Remington K."/>
            <person name="Saunders R.D.C."/>
            <person name="Scheeler F."/>
            <person name="Shen H."/>
            <person name="Shue B.C."/>
            <person name="Siden-Kiamos I."/>
            <person name="Simpson M."/>
            <person name="Skupski M.P."/>
            <person name="Smith T.J."/>
            <person name="Spier E."/>
            <person name="Spradling A.C."/>
            <person name="Stapleton M."/>
            <person name="Strong R."/>
            <person name="Sun E."/>
            <person name="Svirskas R."/>
            <person name="Tector C."/>
            <person name="Turner R."/>
            <person name="Venter E."/>
            <person name="Wang A.H."/>
            <person name="Wang X."/>
            <person name="Wang Z.-Y."/>
            <person name="Wassarman D.A."/>
            <person name="Weinstock G.M."/>
            <person name="Weissenbach J."/>
            <person name="Williams S.M."/>
            <person name="Woodage T."/>
            <person name="Worley K.C."/>
            <person name="Wu D."/>
            <person name="Yang S."/>
            <person name="Yao Q.A."/>
            <person name="Ye J."/>
            <person name="Yeh R.-F."/>
            <person name="Zaveri J.S."/>
            <person name="Zhan M."/>
            <person name="Zhang G."/>
            <person name="Zhao Q."/>
            <person name="Zheng L."/>
            <person name="Zheng X.H."/>
            <person name="Zhong F.N."/>
            <person name="Zhong W."/>
            <person name="Zhou X."/>
            <person name="Zhu S.C."/>
            <person name="Zhu X."/>
            <person name="Smith H.O."/>
            <person name="Gibbs R.A."/>
            <person name="Myers E.W."/>
            <person name="Rubin G.M."/>
            <person name="Venter J.C."/>
        </authorList>
    </citation>
    <scope>NUCLEOTIDE SEQUENCE [LARGE SCALE GENOMIC DNA]</scope>
    <source>
        <strain>Berkeley</strain>
    </source>
</reference>
<reference key="2">
    <citation type="journal article" date="2002" name="Genome Biol.">
        <title>Annotation of the Drosophila melanogaster euchromatic genome: a systematic review.</title>
        <authorList>
            <person name="Misra S."/>
            <person name="Crosby M.A."/>
            <person name="Mungall C.J."/>
            <person name="Matthews B.B."/>
            <person name="Campbell K.S."/>
            <person name="Hradecky P."/>
            <person name="Huang Y."/>
            <person name="Kaminker J.S."/>
            <person name="Millburn G.H."/>
            <person name="Prochnik S.E."/>
            <person name="Smith C.D."/>
            <person name="Tupy J.L."/>
            <person name="Whitfield E.J."/>
            <person name="Bayraktaroglu L."/>
            <person name="Berman B.P."/>
            <person name="Bettencourt B.R."/>
            <person name="Celniker S.E."/>
            <person name="de Grey A.D.N.J."/>
            <person name="Drysdale R.A."/>
            <person name="Harris N.L."/>
            <person name="Richter J."/>
            <person name="Russo S."/>
            <person name="Schroeder A.J."/>
            <person name="Shu S.Q."/>
            <person name="Stapleton M."/>
            <person name="Yamada C."/>
            <person name="Ashburner M."/>
            <person name="Gelbart W.M."/>
            <person name="Rubin G.M."/>
            <person name="Lewis S.E."/>
        </authorList>
    </citation>
    <scope>GENOME REANNOTATION</scope>
    <source>
        <strain>Berkeley</strain>
    </source>
</reference>
<reference key="3">
    <citation type="journal article" date="2002" name="Genome Biol.">
        <title>A Drosophila full-length cDNA resource.</title>
        <authorList>
            <person name="Stapleton M."/>
            <person name="Carlson J.W."/>
            <person name="Brokstein P."/>
            <person name="Yu C."/>
            <person name="Champe M."/>
            <person name="George R.A."/>
            <person name="Guarin H."/>
            <person name="Kronmiller B."/>
            <person name="Pacleb J.M."/>
            <person name="Park S."/>
            <person name="Wan K.H."/>
            <person name="Rubin G.M."/>
            <person name="Celniker S.E."/>
        </authorList>
    </citation>
    <scope>NUCLEOTIDE SEQUENCE [LARGE SCALE MRNA] (ISOFORMS 1 AND 2)</scope>
    <source>
        <strain>Berkeley</strain>
        <tissue>Embryo</tissue>
    </source>
</reference>
<reference key="4">
    <citation type="journal article" date="2011" name="Mol. Cell">
        <title>The little elongation complex regulates small nuclear RNA transcription.</title>
        <authorList>
            <person name="Smith E.R."/>
            <person name="Lin C."/>
            <person name="Garrett A.S."/>
            <person name="Thornton J."/>
            <person name="Mohaghegh N."/>
            <person name="Hu D."/>
            <person name="Jackson J."/>
            <person name="Saraf A."/>
            <person name="Swanson S.K."/>
            <person name="Seidel C."/>
            <person name="Florens L."/>
            <person name="Washburn M.P."/>
            <person name="Eissenberg J.C."/>
            <person name="Shilatifard A."/>
        </authorList>
    </citation>
    <scope>FUNCTION</scope>
    <scope>SUBCELLULAR LOCATION</scope>
    <scope>IDENTIFICATION IN THE LEC COMPLEX</scope>
</reference>
<reference key="5">
    <citation type="journal article" date="2013" name="Mol. Cell">
        <title>The little elongation complex functions at initiation and elongation phases of snRNA gene transcription.</title>
        <authorList>
            <person name="Hu D."/>
            <person name="Smith E.R."/>
            <person name="Garruss A.S."/>
            <person name="Mohaghegh N."/>
            <person name="Varberg J.M."/>
            <person name="Lin C."/>
            <person name="Jackson J."/>
            <person name="Gao X."/>
            <person name="Saraf A."/>
            <person name="Florens L."/>
            <person name="Washburn M.P."/>
            <person name="Eissenberg J.C."/>
            <person name="Shilatifard A."/>
        </authorList>
    </citation>
    <scope>FUNCTION</scope>
    <scope>SUBCELLULAR LOCATION</scope>
</reference>
<protein>
    <recommendedName>
        <fullName>Little elongation complex subunit 1</fullName>
    </recommendedName>
    <alternativeName>
        <fullName>Interactor of little elongator complex ELL subunit 1</fullName>
    </alternativeName>
</protein>
<feature type="chain" id="PRO_0000430424" description="Little elongation complex subunit 1">
    <location>
        <begin position="1"/>
        <end position="1395"/>
    </location>
</feature>
<feature type="region of interest" description="Disordered" evidence="2">
    <location>
        <begin position="175"/>
        <end position="212"/>
    </location>
</feature>
<feature type="region of interest" description="Disordered" evidence="2">
    <location>
        <begin position="452"/>
        <end position="496"/>
    </location>
</feature>
<feature type="region of interest" description="Disordered" evidence="2">
    <location>
        <begin position="561"/>
        <end position="588"/>
    </location>
</feature>
<feature type="region of interest" description="Disordered" evidence="2">
    <location>
        <begin position="658"/>
        <end position="680"/>
    </location>
</feature>
<feature type="region of interest" description="Disordered" evidence="2">
    <location>
        <begin position="707"/>
        <end position="786"/>
    </location>
</feature>
<feature type="region of interest" description="Disordered" evidence="2">
    <location>
        <begin position="841"/>
        <end position="872"/>
    </location>
</feature>
<feature type="region of interest" description="Disordered" evidence="2">
    <location>
        <begin position="908"/>
        <end position="936"/>
    </location>
</feature>
<feature type="coiled-coil region" evidence="1">
    <location>
        <begin position="748"/>
        <end position="778"/>
    </location>
</feature>
<feature type="compositionally biased region" description="Basic residues" evidence="2">
    <location>
        <begin position="478"/>
        <end position="489"/>
    </location>
</feature>
<feature type="compositionally biased region" description="Acidic residues" evidence="2">
    <location>
        <begin position="710"/>
        <end position="720"/>
    </location>
</feature>
<feature type="compositionally biased region" description="Basic and acidic residues" evidence="2">
    <location>
        <begin position="721"/>
        <end position="731"/>
    </location>
</feature>
<feature type="compositionally biased region" description="Acidic residues" evidence="2">
    <location>
        <begin position="745"/>
        <end position="762"/>
    </location>
</feature>
<feature type="compositionally biased region" description="Basic and acidic residues" evidence="2">
    <location>
        <begin position="763"/>
        <end position="776"/>
    </location>
</feature>
<feature type="compositionally biased region" description="Basic and acidic residues" evidence="2">
    <location>
        <begin position="913"/>
        <end position="936"/>
    </location>
</feature>
<feature type="splice variant" id="VSP_056746" description="In isoform 2." evidence="5">
    <original>PN</original>
    <variation>QI</variation>
    <location>
        <begin position="638"/>
        <end position="639"/>
    </location>
</feature>
<feature type="splice variant" id="VSP_056747" description="In isoform 2." evidence="5">
    <location>
        <begin position="640"/>
        <end position="1395"/>
    </location>
</feature>
<dbReference type="EMBL" id="AE013599">
    <property type="protein sequence ID" value="AAF46989.2"/>
    <property type="molecule type" value="Genomic_DNA"/>
</dbReference>
<dbReference type="EMBL" id="AY121673">
    <property type="protein sequence ID" value="AAM52000.1"/>
    <property type="molecule type" value="mRNA"/>
</dbReference>
<dbReference type="EMBL" id="BT150380">
    <property type="protein sequence ID" value="AGW52190.1"/>
    <property type="molecule type" value="mRNA"/>
</dbReference>
<dbReference type="RefSeq" id="NP_611786.1">
    <molecule id="Q9W1R4-1"/>
    <property type="nucleotide sequence ID" value="NM_137942.2"/>
</dbReference>
<dbReference type="BioGRID" id="63302">
    <property type="interactions" value="4"/>
</dbReference>
<dbReference type="ComplexPortal" id="CPX-2710">
    <property type="entry name" value="Little elongation complex"/>
</dbReference>
<dbReference type="FunCoup" id="Q9W1R4">
    <property type="interactions" value="119"/>
</dbReference>
<dbReference type="IntAct" id="Q9W1R4">
    <property type="interactions" value="5"/>
</dbReference>
<dbReference type="STRING" id="7227.FBpp0071919"/>
<dbReference type="GlyGen" id="Q9W1R4">
    <property type="glycosylation" value="1 site"/>
</dbReference>
<dbReference type="PaxDb" id="7227-FBpp0071919"/>
<dbReference type="EnsemblMetazoa" id="FBtr0072010">
    <molecule id="Q9W1R4-1"/>
    <property type="protein sequence ID" value="FBpp0071919"/>
    <property type="gene ID" value="FBgn0034853"/>
</dbReference>
<dbReference type="GeneID" id="37701"/>
<dbReference type="KEGG" id="dme:Dmel_CG13550"/>
<dbReference type="UCSC" id="CG13550-RA">
    <molecule id="Q9W1R4-1"/>
    <property type="organism name" value="d. melanogaster"/>
</dbReference>
<dbReference type="AGR" id="FB:FBgn0034853"/>
<dbReference type="CTD" id="23379"/>
<dbReference type="FlyBase" id="FBgn0034853">
    <property type="gene designation" value="Ice1"/>
</dbReference>
<dbReference type="VEuPathDB" id="VectorBase:FBgn0034853"/>
<dbReference type="eggNOG" id="ENOG502S8KT">
    <property type="taxonomic scope" value="Eukaryota"/>
</dbReference>
<dbReference type="HOGENOM" id="CLU_004489_0_0_1"/>
<dbReference type="InParanoid" id="Q9W1R4"/>
<dbReference type="OMA" id="FNMANCD"/>
<dbReference type="OrthoDB" id="6368736at2759"/>
<dbReference type="PhylomeDB" id="Q9W1R4"/>
<dbReference type="SignaLink" id="Q9W1R4"/>
<dbReference type="BioGRID-ORCS" id="37701">
    <property type="hits" value="0 hits in 1 CRISPR screen"/>
</dbReference>
<dbReference type="GenomeRNAi" id="37701"/>
<dbReference type="PRO" id="PR:Q9W1R4"/>
<dbReference type="Proteomes" id="UP000000803">
    <property type="component" value="Chromosome 2R"/>
</dbReference>
<dbReference type="Bgee" id="FBgn0034853">
    <property type="expression patterns" value="Expressed in egg chamber and 43 other cell types or tissues"/>
</dbReference>
<dbReference type="GO" id="GO:0000791">
    <property type="term" value="C:euchromatin"/>
    <property type="evidence" value="ECO:0000315"/>
    <property type="project" value="UniProtKB"/>
</dbReference>
<dbReference type="GO" id="GO:0032783">
    <property type="term" value="C:super elongation complex"/>
    <property type="evidence" value="ECO:0000353"/>
    <property type="project" value="FlyBase"/>
</dbReference>
<dbReference type="GO" id="GO:0008023">
    <property type="term" value="C:transcription elongation factor complex"/>
    <property type="evidence" value="ECO:0000314"/>
    <property type="project" value="UniProtKB"/>
</dbReference>
<dbReference type="GO" id="GO:0003682">
    <property type="term" value="F:chromatin binding"/>
    <property type="evidence" value="ECO:0000314"/>
    <property type="project" value="FlyBase"/>
</dbReference>
<dbReference type="GO" id="GO:0042795">
    <property type="term" value="P:snRNA transcription by RNA polymerase II"/>
    <property type="evidence" value="ECO:0000315"/>
    <property type="project" value="UniProtKB"/>
</dbReference>
<organism>
    <name type="scientific">Drosophila melanogaster</name>
    <name type="common">Fruit fly</name>
    <dbReference type="NCBI Taxonomy" id="7227"/>
    <lineage>
        <taxon>Eukaryota</taxon>
        <taxon>Metazoa</taxon>
        <taxon>Ecdysozoa</taxon>
        <taxon>Arthropoda</taxon>
        <taxon>Hexapoda</taxon>
        <taxon>Insecta</taxon>
        <taxon>Pterygota</taxon>
        <taxon>Neoptera</taxon>
        <taxon>Endopterygota</taxon>
        <taxon>Diptera</taxon>
        <taxon>Brachycera</taxon>
        <taxon>Muscomorpha</taxon>
        <taxon>Ephydroidea</taxon>
        <taxon>Drosophilidae</taxon>
        <taxon>Drosophila</taxon>
        <taxon>Sophophora</taxon>
    </lineage>
</organism>
<keyword id="KW-0025">Alternative splicing</keyword>
<keyword id="KW-0175">Coiled coil</keyword>
<keyword id="KW-0539">Nucleus</keyword>
<keyword id="KW-1185">Reference proteome</keyword>
<keyword id="KW-0804">Transcription</keyword>
<keyword id="KW-0805">Transcription regulation</keyword>
<evidence type="ECO:0000255" key="1"/>
<evidence type="ECO:0000256" key="2">
    <source>
        <dbReference type="SAM" id="MobiDB-lite"/>
    </source>
</evidence>
<evidence type="ECO:0000269" key="3">
    <source>
    </source>
</evidence>
<evidence type="ECO:0000269" key="4">
    <source>
    </source>
</evidence>
<evidence type="ECO:0000303" key="5">
    <source>
    </source>
</evidence>
<evidence type="ECO:0000305" key="6"/>